<evidence type="ECO:0000255" key="1"/>
<evidence type="ECO:0000255" key="2">
    <source>
        <dbReference type="PROSITE-ProRule" id="PRU00196"/>
    </source>
</evidence>
<evidence type="ECO:0000269" key="3">
    <source>
    </source>
</evidence>
<evidence type="ECO:0000269" key="4">
    <source>
    </source>
</evidence>
<evidence type="ECO:0000269" key="5">
    <source>
    </source>
</evidence>
<evidence type="ECO:0000269" key="6">
    <source>
    </source>
</evidence>
<evidence type="ECO:0000269" key="7">
    <source>
    </source>
</evidence>
<evidence type="ECO:0000269" key="8">
    <source>
    </source>
</evidence>
<evidence type="ECO:0000269" key="9">
    <source>
    </source>
</evidence>
<evidence type="ECO:0000269" key="10">
    <source>
    </source>
</evidence>
<evidence type="ECO:0000269" key="11">
    <source>
    </source>
</evidence>
<evidence type="ECO:0000269" key="12">
    <source>
    </source>
</evidence>
<evidence type="ECO:0000269" key="13">
    <source>
    </source>
</evidence>
<evidence type="ECO:0000269" key="14">
    <source>
    </source>
</evidence>
<evidence type="ECO:0000269" key="15">
    <source>
    </source>
</evidence>
<evidence type="ECO:0000269" key="16">
    <source>
    </source>
</evidence>
<evidence type="ECO:0000269" key="17">
    <source>
    </source>
</evidence>
<evidence type="ECO:0000269" key="18">
    <source ref="3"/>
</evidence>
<evidence type="ECO:0000303" key="19">
    <source>
    </source>
</evidence>
<evidence type="ECO:0000303" key="20">
    <source ref="3"/>
</evidence>
<evidence type="ECO:0000305" key="21"/>
<evidence type="ECO:0000305" key="22">
    <source>
    </source>
</evidence>
<dbReference type="EMBL" id="Z22968">
    <property type="protein sequence ID" value="CAA80541.1"/>
    <property type="status" value="ALT_INIT"/>
    <property type="molecule type" value="mRNA"/>
</dbReference>
<dbReference type="EMBL" id="Z22969">
    <property type="protein sequence ID" value="CAA80542.1"/>
    <property type="status" value="ALT_INIT"/>
    <property type="molecule type" value="mRNA"/>
</dbReference>
<dbReference type="EMBL" id="Z22970">
    <property type="protein sequence ID" value="CAA80543.1"/>
    <property type="status" value="ALT_INIT"/>
    <property type="molecule type" value="mRNA"/>
</dbReference>
<dbReference type="EMBL" id="Z22971">
    <property type="protein sequence ID" value="CAA80544.1"/>
    <property type="status" value="ALT_INIT"/>
    <property type="molecule type" value="mRNA"/>
</dbReference>
<dbReference type="EMBL" id="Y18388">
    <property type="protein sequence ID" value="CAB45233.1"/>
    <property type="status" value="ALT_INIT"/>
    <property type="molecule type" value="Genomic_DNA"/>
</dbReference>
<dbReference type="EMBL" id="Y18389">
    <property type="protein sequence ID" value="CAB45233.1"/>
    <property type="status" value="JOINED"/>
    <property type="molecule type" value="Genomic_DNA"/>
</dbReference>
<dbReference type="EMBL" id="Y18390">
    <property type="protein sequence ID" value="CAB45233.1"/>
    <property type="status" value="JOINED"/>
    <property type="molecule type" value="Genomic_DNA"/>
</dbReference>
<dbReference type="EMBL" id="Y18391">
    <property type="protein sequence ID" value="CAB45233.1"/>
    <property type="status" value="JOINED"/>
    <property type="molecule type" value="Genomic_DNA"/>
</dbReference>
<dbReference type="EMBL" id="Y18392">
    <property type="protein sequence ID" value="CAB45233.1"/>
    <property type="status" value="JOINED"/>
    <property type="molecule type" value="Genomic_DNA"/>
</dbReference>
<dbReference type="EMBL" id="Y18393">
    <property type="protein sequence ID" value="CAB45233.1"/>
    <property type="status" value="JOINED"/>
    <property type="molecule type" value="Genomic_DNA"/>
</dbReference>
<dbReference type="EMBL" id="Y18394">
    <property type="protein sequence ID" value="CAB45233.1"/>
    <property type="status" value="JOINED"/>
    <property type="molecule type" value="Genomic_DNA"/>
</dbReference>
<dbReference type="EMBL" id="Y18395">
    <property type="protein sequence ID" value="CAB45233.1"/>
    <property type="status" value="JOINED"/>
    <property type="molecule type" value="Genomic_DNA"/>
</dbReference>
<dbReference type="EMBL" id="Y18396">
    <property type="protein sequence ID" value="CAB45233.1"/>
    <property type="status" value="JOINED"/>
    <property type="molecule type" value="Genomic_DNA"/>
</dbReference>
<dbReference type="EMBL" id="Y18397">
    <property type="protein sequence ID" value="CAB45233.1"/>
    <property type="status" value="JOINED"/>
    <property type="molecule type" value="Genomic_DNA"/>
</dbReference>
<dbReference type="EMBL" id="Y18398">
    <property type="protein sequence ID" value="CAB45233.1"/>
    <property type="status" value="JOINED"/>
    <property type="molecule type" value="Genomic_DNA"/>
</dbReference>
<dbReference type="EMBL" id="Y18399">
    <property type="protein sequence ID" value="CAB45233.1"/>
    <property type="status" value="JOINED"/>
    <property type="molecule type" value="Genomic_DNA"/>
</dbReference>
<dbReference type="EMBL" id="Y18400">
    <property type="protein sequence ID" value="CAB45233.1"/>
    <property type="status" value="JOINED"/>
    <property type="molecule type" value="Genomic_DNA"/>
</dbReference>
<dbReference type="EMBL" id="Y18401">
    <property type="protein sequence ID" value="CAB45233.1"/>
    <property type="status" value="JOINED"/>
    <property type="molecule type" value="Genomic_DNA"/>
</dbReference>
<dbReference type="EMBL" id="Y18402">
    <property type="protein sequence ID" value="CAB45233.1"/>
    <property type="status" value="JOINED"/>
    <property type="molecule type" value="Genomic_DNA"/>
</dbReference>
<dbReference type="EMBL" id="Y18403">
    <property type="protein sequence ID" value="CAB45233.1"/>
    <property type="status" value="JOINED"/>
    <property type="molecule type" value="Genomic_DNA"/>
</dbReference>
<dbReference type="EMBL" id="DQ058615">
    <property type="protein sequence ID" value="AAY99762.1"/>
    <property type="molecule type" value="mRNA"/>
</dbReference>
<dbReference type="EMBL" id="AC131206">
    <property type="status" value="NOT_ANNOTATED_CDS"/>
    <property type="molecule type" value="Genomic_DNA"/>
</dbReference>
<dbReference type="EMBL" id="BC051281">
    <property type="protein sequence ID" value="AAH51281.1"/>
    <property type="molecule type" value="mRNA"/>
</dbReference>
<dbReference type="CCDS" id="CCDS53742.1">
    <molecule id="Q86VB7-3"/>
</dbReference>
<dbReference type="CCDS" id="CCDS8578.1">
    <molecule id="Q86VB7-1"/>
</dbReference>
<dbReference type="PIR" id="I38004">
    <property type="entry name" value="I38004"/>
</dbReference>
<dbReference type="PIR" id="I38005">
    <property type="entry name" value="I38005"/>
</dbReference>
<dbReference type="PIR" id="I38006">
    <property type="entry name" value="I38006"/>
</dbReference>
<dbReference type="RefSeq" id="NP_001357074.1">
    <molecule id="Q86VB7-3"/>
    <property type="nucleotide sequence ID" value="NM_001370145.1"/>
</dbReference>
<dbReference type="RefSeq" id="NP_004235.4">
    <molecule id="Q86VB7-1"/>
    <property type="nucleotide sequence ID" value="NM_004244.5"/>
</dbReference>
<dbReference type="RefSeq" id="NP_981961.2">
    <molecule id="Q86VB7-3"/>
    <property type="nucleotide sequence ID" value="NM_203416.4"/>
</dbReference>
<dbReference type="RefSeq" id="XP_016875720.1">
    <property type="nucleotide sequence ID" value="XM_017020231.1"/>
</dbReference>
<dbReference type="RefSeq" id="XP_047285851.1">
    <molecule id="Q86VB7-2"/>
    <property type="nucleotide sequence ID" value="XM_047429895.1"/>
</dbReference>
<dbReference type="PDB" id="8XMK">
    <property type="method" value="EM"/>
    <property type="resolution" value="3.03 A"/>
    <property type="chains" value="D/E/F=42-1050"/>
</dbReference>
<dbReference type="PDB" id="8XMP">
    <property type="method" value="EM"/>
    <property type="resolution" value="3.11 A"/>
    <property type="chains" value="D/E/F=42-1050"/>
</dbReference>
<dbReference type="PDB" id="8XMQ">
    <property type="method" value="EM"/>
    <property type="resolution" value="3.21 A"/>
    <property type="chains" value="D/F=42-1050"/>
</dbReference>
<dbReference type="PDB" id="8XMW">
    <property type="method" value="EM"/>
    <property type="resolution" value="2.94 A"/>
    <property type="chains" value="D/G=42-1050"/>
</dbReference>
<dbReference type="PDB" id="9FHB">
    <property type="method" value="EM"/>
    <property type="resolution" value="3.87 A"/>
    <property type="chains" value="D=1-1156"/>
</dbReference>
<dbReference type="PDB" id="9FMU">
    <property type="method" value="EM"/>
    <property type="resolution" value="4.46 A"/>
    <property type="chains" value="D/E=1-1036"/>
</dbReference>
<dbReference type="PDB" id="9FNO">
    <property type="method" value="EM"/>
    <property type="resolution" value="5.20 A"/>
    <property type="chains" value="E/F/G=1-1156"/>
</dbReference>
<dbReference type="PDBsum" id="8XMK"/>
<dbReference type="PDBsum" id="8XMP"/>
<dbReference type="PDBsum" id="8XMQ"/>
<dbReference type="PDBsum" id="8XMW"/>
<dbReference type="PDBsum" id="9FHB"/>
<dbReference type="PDBsum" id="9FMU"/>
<dbReference type="PDBsum" id="9FNO"/>
<dbReference type="EMDB" id="EMD-38480"/>
<dbReference type="EMDB" id="EMD-38485"/>
<dbReference type="EMDB" id="EMD-38486"/>
<dbReference type="EMDB" id="EMD-38490"/>
<dbReference type="EMDB" id="EMD-50444"/>
<dbReference type="EMDB" id="EMD-50570"/>
<dbReference type="EMDB" id="EMD-50600"/>
<dbReference type="SMR" id="Q86VB7"/>
<dbReference type="BioGRID" id="114741">
    <property type="interactions" value="7"/>
</dbReference>
<dbReference type="FunCoup" id="Q86VB7">
    <property type="interactions" value="27"/>
</dbReference>
<dbReference type="IntAct" id="Q86VB7">
    <property type="interactions" value="6"/>
</dbReference>
<dbReference type="MINT" id="Q86VB7"/>
<dbReference type="STRING" id="9606.ENSP00000352071"/>
<dbReference type="DrugBank" id="DB05389">
    <property type="generic name" value="Tetrachlorodecaoxide"/>
</dbReference>
<dbReference type="GlyConnect" id="1723">
    <property type="glycosylation" value="14 N-Linked glycans (6 sites)"/>
</dbReference>
<dbReference type="GlyCosmos" id="Q86VB7">
    <property type="glycosylation" value="10 sites, 16 glycans"/>
</dbReference>
<dbReference type="GlyGen" id="Q86VB7">
    <property type="glycosylation" value="13 sites, 72 N-linked glycans (8 sites), 2 O-linked glycans (3 sites)"/>
</dbReference>
<dbReference type="iPTMnet" id="Q86VB7"/>
<dbReference type="PhosphoSitePlus" id="Q86VB7"/>
<dbReference type="SwissPalm" id="Q86VB7"/>
<dbReference type="BioMuta" id="CD163"/>
<dbReference type="DMDM" id="313104083"/>
<dbReference type="CPTAC" id="CPTAC-5983"/>
<dbReference type="jPOST" id="Q86VB7"/>
<dbReference type="MassIVE" id="Q86VB7"/>
<dbReference type="PaxDb" id="9606-ENSP00000352071"/>
<dbReference type="PeptideAtlas" id="Q86VB7"/>
<dbReference type="ProteomicsDB" id="69982">
    <molecule id="Q86VB7-1"/>
</dbReference>
<dbReference type="ProteomicsDB" id="69983">
    <molecule id="Q86VB7-2"/>
</dbReference>
<dbReference type="ProteomicsDB" id="69984">
    <molecule id="Q86VB7-3"/>
</dbReference>
<dbReference type="ProteomicsDB" id="69985">
    <molecule id="Q86VB7-4"/>
</dbReference>
<dbReference type="Antibodypedia" id="3721">
    <property type="antibodies" value="1652 antibodies from 45 providers"/>
</dbReference>
<dbReference type="CPTC" id="Q86VB7">
    <property type="antibodies" value="1 antibody"/>
</dbReference>
<dbReference type="DNASU" id="9332"/>
<dbReference type="Ensembl" id="ENST00000359156.8">
    <molecule id="Q86VB7-1"/>
    <property type="protein sequence ID" value="ENSP00000352071.4"/>
    <property type="gene ID" value="ENSG00000177575.13"/>
</dbReference>
<dbReference type="Ensembl" id="ENST00000432237.3">
    <molecule id="Q86VB7-3"/>
    <property type="protein sequence ID" value="ENSP00000403885.2"/>
    <property type="gene ID" value="ENSG00000177575.13"/>
</dbReference>
<dbReference type="GeneID" id="9332"/>
<dbReference type="KEGG" id="hsa:9332"/>
<dbReference type="MANE-Select" id="ENST00000432237.3">
    <molecule id="Q86VB7-3"/>
    <property type="protein sequence ID" value="ENSP00000403885.2"/>
    <property type="RefSeq nucleotide sequence ID" value="NM_203416.4"/>
    <property type="RefSeq protein sequence ID" value="NP_981961.2"/>
</dbReference>
<dbReference type="UCSC" id="uc001qsz.4">
    <molecule id="Q86VB7-1"/>
    <property type="organism name" value="human"/>
</dbReference>
<dbReference type="AGR" id="HGNC:1631"/>
<dbReference type="CTD" id="9332"/>
<dbReference type="DisGeNET" id="9332"/>
<dbReference type="GeneCards" id="CD163"/>
<dbReference type="HGNC" id="HGNC:1631">
    <property type="gene designation" value="CD163"/>
</dbReference>
<dbReference type="HPA" id="ENSG00000177575">
    <property type="expression patterns" value="Tissue enhanced (lymphoid)"/>
</dbReference>
<dbReference type="MIM" id="605545">
    <property type="type" value="gene"/>
</dbReference>
<dbReference type="neXtProt" id="NX_Q86VB7"/>
<dbReference type="OpenTargets" id="ENSG00000177575"/>
<dbReference type="PharmGKB" id="PA26190"/>
<dbReference type="VEuPathDB" id="HostDB:ENSG00000177575"/>
<dbReference type="eggNOG" id="ENOG502QQ5W">
    <property type="taxonomic scope" value="Eukaryota"/>
</dbReference>
<dbReference type="GeneTree" id="ENSGT00940000155987"/>
<dbReference type="HOGENOM" id="CLU_002555_0_1_1"/>
<dbReference type="InParanoid" id="Q86VB7"/>
<dbReference type="OMA" id="AGENKCS"/>
<dbReference type="OrthoDB" id="536948at2759"/>
<dbReference type="PAN-GO" id="Q86VB7">
    <property type="GO annotations" value="1 GO annotation based on evolutionary models"/>
</dbReference>
<dbReference type="PhylomeDB" id="Q86VB7"/>
<dbReference type="TreeFam" id="TF329295"/>
<dbReference type="PathwayCommons" id="Q86VB7"/>
<dbReference type="Reactome" id="R-HSA-2168880">
    <property type="pathway name" value="Scavenging of heme from plasma"/>
</dbReference>
<dbReference type="Reactome" id="R-HSA-9662834">
    <property type="pathway name" value="CD163 mediating an anti-inflammatory response"/>
</dbReference>
<dbReference type="SignaLink" id="Q86VB7"/>
<dbReference type="SIGNOR" id="Q86VB7"/>
<dbReference type="BioGRID-ORCS" id="9332">
    <property type="hits" value="8 hits in 1147 CRISPR screens"/>
</dbReference>
<dbReference type="ChiTaRS" id="CD163">
    <property type="organism name" value="human"/>
</dbReference>
<dbReference type="GeneWiki" id="CD163"/>
<dbReference type="GenomeRNAi" id="9332"/>
<dbReference type="Pharos" id="Q86VB7">
    <property type="development level" value="Tbio"/>
</dbReference>
<dbReference type="PRO" id="PR:Q86VB7"/>
<dbReference type="Proteomes" id="UP000005640">
    <property type="component" value="Chromosome 12"/>
</dbReference>
<dbReference type="RNAct" id="Q86VB7">
    <property type="molecule type" value="protein"/>
</dbReference>
<dbReference type="Bgee" id="ENSG00000177575">
    <property type="expression patterns" value="Expressed in right lung and 167 other cell types or tissues"/>
</dbReference>
<dbReference type="ExpressionAtlas" id="Q86VB7">
    <property type="expression patterns" value="baseline and differential"/>
</dbReference>
<dbReference type="GO" id="GO:0005829">
    <property type="term" value="C:cytosol"/>
    <property type="evidence" value="ECO:0000304"/>
    <property type="project" value="Reactome"/>
</dbReference>
<dbReference type="GO" id="GO:0030666">
    <property type="term" value="C:endocytic vesicle membrane"/>
    <property type="evidence" value="ECO:0000304"/>
    <property type="project" value="Reactome"/>
</dbReference>
<dbReference type="GO" id="GO:0009897">
    <property type="term" value="C:external side of plasma membrane"/>
    <property type="evidence" value="ECO:0000314"/>
    <property type="project" value="CAFA"/>
</dbReference>
<dbReference type="GO" id="GO:0005576">
    <property type="term" value="C:extracellular region"/>
    <property type="evidence" value="ECO:0000304"/>
    <property type="project" value="Reactome"/>
</dbReference>
<dbReference type="GO" id="GO:0005886">
    <property type="term" value="C:plasma membrane"/>
    <property type="evidence" value="ECO:0000314"/>
    <property type="project" value="HPA"/>
</dbReference>
<dbReference type="GO" id="GO:0097110">
    <property type="term" value="F:scaffold protein binding"/>
    <property type="evidence" value="ECO:0000353"/>
    <property type="project" value="ARUK-UCL"/>
</dbReference>
<dbReference type="GO" id="GO:0005044">
    <property type="term" value="F:scavenger receptor activity"/>
    <property type="evidence" value="ECO:0000304"/>
    <property type="project" value="ProtInc"/>
</dbReference>
<dbReference type="GO" id="GO:0006953">
    <property type="term" value="P:acute-phase response"/>
    <property type="evidence" value="ECO:0007669"/>
    <property type="project" value="UniProtKB-KW"/>
</dbReference>
<dbReference type="FunFam" id="3.10.250.10:FF:000012">
    <property type="entry name" value="CD163 molecule like 1"/>
    <property type="match status" value="1"/>
</dbReference>
<dbReference type="FunFam" id="3.10.250.10:FF:000002">
    <property type="entry name" value="Scavenger receptor cysteine-rich type 1 protein M130"/>
    <property type="match status" value="5"/>
</dbReference>
<dbReference type="FunFam" id="3.10.250.10:FF:000004">
    <property type="entry name" value="Scavenger receptor cysteine-rich type 1 protein M130"/>
    <property type="match status" value="2"/>
</dbReference>
<dbReference type="FunFam" id="3.10.250.10:FF:000015">
    <property type="entry name" value="Scavenger receptor cysteine-rich type 1 protein M130"/>
    <property type="match status" value="1"/>
</dbReference>
<dbReference type="Gene3D" id="3.10.250.10">
    <property type="entry name" value="SRCR-like domain"/>
    <property type="match status" value="9"/>
</dbReference>
<dbReference type="InterPro" id="IPR001190">
    <property type="entry name" value="SRCR"/>
</dbReference>
<dbReference type="InterPro" id="IPR036772">
    <property type="entry name" value="SRCR-like_dom_sf"/>
</dbReference>
<dbReference type="PANTHER" id="PTHR19331:SF468">
    <property type="entry name" value="SCAVENGER RECEPTOR CYSTEINE-RICH TYPE 1 PROTEIN M160"/>
    <property type="match status" value="1"/>
</dbReference>
<dbReference type="PANTHER" id="PTHR19331">
    <property type="entry name" value="SCAVENGER RECEPTOR DOMAIN-CONTAINING"/>
    <property type="match status" value="1"/>
</dbReference>
<dbReference type="Pfam" id="PF00530">
    <property type="entry name" value="SRCR"/>
    <property type="match status" value="9"/>
</dbReference>
<dbReference type="PRINTS" id="PR00258">
    <property type="entry name" value="SPERACTRCPTR"/>
</dbReference>
<dbReference type="SMART" id="SM00202">
    <property type="entry name" value="SR"/>
    <property type="match status" value="9"/>
</dbReference>
<dbReference type="SUPFAM" id="SSF56487">
    <property type="entry name" value="SRCR-like"/>
    <property type="match status" value="9"/>
</dbReference>
<dbReference type="PROSITE" id="PS00420">
    <property type="entry name" value="SRCR_1"/>
    <property type="match status" value="4"/>
</dbReference>
<dbReference type="PROSITE" id="PS50287">
    <property type="entry name" value="SRCR_2"/>
    <property type="match status" value="9"/>
</dbReference>
<organism>
    <name type="scientific">Homo sapiens</name>
    <name type="common">Human</name>
    <dbReference type="NCBI Taxonomy" id="9606"/>
    <lineage>
        <taxon>Eukaryota</taxon>
        <taxon>Metazoa</taxon>
        <taxon>Chordata</taxon>
        <taxon>Craniata</taxon>
        <taxon>Vertebrata</taxon>
        <taxon>Euteleostomi</taxon>
        <taxon>Mammalia</taxon>
        <taxon>Eutheria</taxon>
        <taxon>Euarchontoglires</taxon>
        <taxon>Primates</taxon>
        <taxon>Haplorrhini</taxon>
        <taxon>Catarrhini</taxon>
        <taxon>Hominidae</taxon>
        <taxon>Homo</taxon>
    </lineage>
</organism>
<sequence>MSKLRMVLLEDSGSADFRRHFVNLSPFTITVVLLLSACFVTSSLGGTDKELRLVDGENKCSGRVEVKVQEEWGTVCNNGWSMEAVSVICNQLGCPTAIKAPGWANSSAGSGRIWMDHVSCRGNESALWDCKHDGWGKHSNCTHQQDAGVTCSDGSNLEMRLTRGGNMCSGRIEIKFQGRWGTVCDDNFNIDHASVICRQLECGSAVSFSGSSNFGEGSGPIWFDDLICNGNESALWNCKHQGWGKHNCDHAEDAGVICSKGADLSLRLVDGVTECSGRLEVRFQGEWGTICDDGWDSYDAAVACKQLGCPTAVTAIGRVNASKGFGHIWLDSVSCQGHEPAIWQCKHHEWGKHYCNHNEDAGVTCSDGSDLELRLRGGGSRCAGTVEVEIQRLLGKVCDRGWGLKEADVVCRQLGCGSALKTSYQVYSKIQATNTWLFLSSCNGNETSLWDCKNWQWGGLTCDHYEEAKITCSAHREPRLVGGDIPCSGRVEVKHGDTWGSICDSDFSLEAASVLCRELQCGTVVSILGGAHFGEGNGQIWAEEFQCEGHESHLSLCPVAPRPEGTCSHSRDVGVVCSRYTEIRLVNGKTPCEGRVELKTLGAWGSLCNSHWDIEDAHVLCQQLKCGVALSTPGGARFGKGNGQIWRHMFHCTGTEQHMGDCPVTALGASLCPSEQVASVICSGNQSQTLSSCNSSSLGPTRPTIPEESAVACIESGQLRLVNGGGRCAGRVEIYHEGSWGTICDDSWDLSDAHVVCRQLGCGEAINATGSAHFGEGTGPIWLDEMKCNGKESRIWQCHSHGWGQQNCRHKEDAGVICSEFMSLRLTSEASREACAGRLEVFYNGAWGTVGKSSMSETTVGVVCRQLGCADKGKINPASLDKAMSIPMWVDNVQCPKGPDTLWQCPSSPWEKRLASPSEETWITCDNKIRLQEGPTSCSGRVEIWHGGSWGTVCDDSWDLDDAQVVCQQLGCGPALKAFKEAEFGQGTGPIWLNEVKCKGNESSLWDCPARRWGHSECGHKEDAAVNCTDISVQKTPQKATTGRSSRQSSFIAVGILGVVLLAIFVALFFLTKKRRQRQRLAVSSRGENLVHQIQYREMNSCLNADDLDLMNSSENSHESADFSAAELISVSKFLPISGMEKEAILSHTEKENGNL</sequence>
<proteinExistence type="evidence at protein level"/>
<comment type="function">
    <text>Acute phase-regulated receptor involved in clearance and endocytosis of hemoglobin/haptoglobin complexes by macrophages and may thereby protect tissues from free hemoglobin-mediated oxidative damage. May play a role in the uptake and recycling of iron, via endocytosis of hemoglobin/haptoglobin and subsequent breakdown of heme. Binds hemoglobin/haptoglobin complexes in a calcium-dependent and pH-dependent manner. Exhibits a higher affinity for complexes of hemoglobin and multimeric haptoglobin of HP*1F phenotype than for complexes of hemoglobin and dimeric haptoglobin of HP*1S phenotype. Induces a cascade of intracellular signals that involves tyrosine kinase-dependent calcium mobilization, inositol triphosphate production and secretion of IL6 and CSF1. Isoform 3 exhibits the higher capacity for ligand endocytosis and the more pronounced surface expression when expressed in cells.</text>
</comment>
<comment type="function">
    <text>After shedding, the soluble form (sCD163) may play an anti-inflammatory role, and may be a valuable diagnostic parameter for monitoring macrophage activation in inflammatory conditions.</text>
</comment>
<comment type="biophysicochemical properties">
    <kinetics>
        <KM evidence="7">2 nM for hemoglobin/haptoglobin of HP*1S phenotype</KM>
        <KM evidence="7">0.2 nM for hemoglobin/haptoglobin of HP*1F phenotype</KM>
    </kinetics>
</comment>
<comment type="subunit">
    <text evidence="8">Interacts with CSNK2B.</text>
</comment>
<comment type="interaction">
    <interactant intactId="EBI-2808455">
        <id>Q86VB7</id>
    </interactant>
    <interactant intactId="EBI-2869867">
        <id>P12314</id>
        <label>FCGR1A</label>
    </interactant>
    <organismsDiffer>false</organismsDiffer>
    <experiments>3</experiments>
</comment>
<comment type="subcellular location">
    <molecule>Soluble CD163</molecule>
    <subcellularLocation>
        <location evidence="9">Secreted</location>
    </subcellularLocation>
</comment>
<comment type="subcellular location">
    <subcellularLocation>
        <location evidence="5 6">Cell membrane</location>
        <topology evidence="5 6">Single-pass type I membrane protein</topology>
    </subcellularLocation>
    <text>Isoform 1 and isoform 2 show a lower surface expression when expressed in cells.</text>
</comment>
<comment type="alternative products">
    <event type="alternative splicing"/>
    <isoform>
        <id>Q86VB7-1</id>
        <name>1</name>
        <name>Long tail variant 1</name>
        <sequence type="displayed"/>
    </isoform>
    <isoform>
        <id>Q86VB7-2</id>
        <name>2</name>
        <name>Long tail variant 2</name>
        <sequence type="described" ref="VSP_019014"/>
    </isoform>
    <isoform>
        <id>Q86VB7-3</id>
        <name>3</name>
        <name>Short tail variant</name>
        <sequence type="described" ref="VSP_019015"/>
    </isoform>
    <isoform>
        <id>Q86VB7-4</id>
        <name>4</name>
        <sequence type="described" ref="VSP_019013 VSP_019015"/>
    </isoform>
</comment>
<comment type="tissue specificity">
    <text evidence="5 7 14">Expressed in monocytes and mature macrophages such as Kupffer cells in the liver, red pulp macrophages in the spleen, cortical macrophages in the thymus, resident bone marrow macrophages and meningeal macrophages of the central nervous system. Expressed also in blood. Isoform 1 is the lowest abundant in the blood. Isoform 2 is the lowest abundant in the liver and the spleen. Isoform 3 is the predominant isoform detected in the blood.</text>
</comment>
<comment type="induction">
    <text evidence="5 6">Induced by anti-inflammatory mediators such as glucocorticoids, interleukin-6/IL6 and interleukin-10/IL10; suppressed by pro-inflammatory mediators like bacterial lipopolysaccharides (LPS), IFNG/IFN-gamma and TNF.</text>
</comment>
<comment type="domain">
    <text evidence="11">The SRCR domain 3 mediates calcium-sensitive interaction with hemoglobin/haptoglobin complexes.</text>
</comment>
<comment type="PTM">
    <text evidence="3 9 10 11">A soluble form (sCD163) is produced by proteolytic shedding which can be induced by lipopolysaccharide, phorbol ester and Fc region of immunoglobulin gamma. This cleavage is dependent on protein kinase C and tyrosine kinases and can be blocked by protease inhibitors. The shedding is inhibited by the tissue inhibitor of metalloproteinase TIMP3, and thus probably induced by membrane-bound metalloproteinases ADAMs.</text>
</comment>
<comment type="PTM">
    <text evidence="22">Phosphorylated.</text>
</comment>
<comment type="miscellaneous">
    <text>Intravenous lipopolysaccharide (LPS) produces a rapid rise of sCD163 in plasma of patient as it induces metalloproteinase-mediated shedding from monocytes surface. Long-term LPS infusion finally increases expression of the membrane-bound form on circulating monocytes.</text>
</comment>
<comment type="miscellaneous">
    <text>The soluble form (sCD163) in plasma is a novel parameter in diseases affecting macrophage function and monocyte/macrophage load in the body. The concentration of sCD163 is probably reflecting the number of macrophages of the 'alternative macrophage activation' phenotype with a high CD163 expression playing a major role in dampening the inflammatory response and scavenging components of damaged cells. This has initiated a number of clinical studies for evaluation of sCD163 as a disease marker in inflammatory conditions e.g. infection, autoimmune disease, transplantation, atherosclerosis and cancer.</text>
</comment>
<comment type="caution">
    <text evidence="21">It is uncertain whether Met-1 or Met-6 is the initiator.</text>
</comment>
<comment type="sequence caution" evidence="21">
    <conflict type="erroneous initiation">
        <sequence resource="EMBL-CDS" id="CAA80541"/>
    </conflict>
    <text>Truncated N-terminus.</text>
</comment>
<comment type="sequence caution" evidence="21">
    <conflict type="erroneous initiation">
        <sequence resource="EMBL-CDS" id="CAA80542"/>
    </conflict>
    <text>Truncated N-terminus.</text>
</comment>
<comment type="sequence caution" evidence="21">
    <conflict type="erroneous initiation">
        <sequence resource="EMBL-CDS" id="CAA80543"/>
    </conflict>
    <text>Truncated N-terminus.</text>
</comment>
<comment type="sequence caution" evidence="21">
    <conflict type="erroneous initiation">
        <sequence resource="EMBL-CDS" id="CAA80544"/>
    </conflict>
    <text>Truncated N-terminus.</text>
</comment>
<comment type="sequence caution" evidence="21">
    <conflict type="erroneous initiation">
        <sequence resource="EMBL-CDS" id="CAB45233"/>
    </conflict>
    <text>Truncated N-terminus.</text>
</comment>
<protein>
    <recommendedName>
        <fullName>Scavenger receptor cysteine-rich type 1 protein M130</fullName>
    </recommendedName>
    <alternativeName>
        <fullName>Hemoglobin scavenger receptor</fullName>
    </alternativeName>
    <cdAntigenName>CD163</cdAntigenName>
    <component>
        <recommendedName>
            <fullName>Soluble CD163</fullName>
            <shortName>sCD163</shortName>
        </recommendedName>
    </component>
</protein>
<keyword id="KW-0002">3D-structure</keyword>
<keyword id="KW-0011">Acute phase</keyword>
<keyword id="KW-0025">Alternative splicing</keyword>
<keyword id="KW-1003">Cell membrane</keyword>
<keyword id="KW-1015">Disulfide bond</keyword>
<keyword id="KW-0325">Glycoprotein</keyword>
<keyword id="KW-0395">Inflammatory response</keyword>
<keyword id="KW-0472">Membrane</keyword>
<keyword id="KW-0597">Phosphoprotein</keyword>
<keyword id="KW-1267">Proteomics identification</keyword>
<keyword id="KW-1185">Reference proteome</keyword>
<keyword id="KW-0677">Repeat</keyword>
<keyword id="KW-0964">Secreted</keyword>
<keyword id="KW-0732">Signal</keyword>
<keyword id="KW-0812">Transmembrane</keyword>
<keyword id="KW-1133">Transmembrane helix</keyword>
<gene>
    <name type="primary">CD163</name>
    <name type="synonym">M130</name>
</gene>
<accession>Q86VB7</accession>
<accession>C9JIG2</accession>
<accession>Q07898</accession>
<accession>Q07899</accession>
<accession>Q07900</accession>
<accession>Q07901</accession>
<accession>Q2VLH7</accession>
<reference key="1">
    <citation type="journal article" date="1993" name="Eur. J. Immunol.">
        <title>A new macrophage differentiation antigen which is a member of the scavenger receptor superfamily.</title>
        <authorList>
            <person name="Law S.K.A."/>
            <person name="Micklem K.J."/>
            <person name="Shaw J.M."/>
            <person name="Zhang X.-P."/>
            <person name="Dong Y."/>
            <person name="Willis A.C."/>
            <person name="Mason D.Y."/>
        </authorList>
    </citation>
    <scope>NUCLEOTIDE SEQUENCE [MRNA] (ISOFORMS 1; 2; 3 AND 4)</scope>
    <scope>VARIANT VAL-342</scope>
</reference>
<reference key="2">
    <citation type="journal article" date="1999" name="Biochem. Biophys. Res. Commun.">
        <title>Genomic organization and chromosomal localization of the human CD163 (M130) gene: a member of the scavenger receptor cysteine-rich superfamily.</title>
        <authorList>
            <person name="Ritter M."/>
            <person name="Buechler C."/>
            <person name="Langmann T."/>
            <person name="Schmitz G."/>
        </authorList>
    </citation>
    <scope>NUCLEOTIDE SEQUENCE [GENOMIC DNA]</scope>
    <scope>VARIANT VAL-342</scope>
</reference>
<reference key="3">
    <citation type="submission" date="2005-05" db="EMBL/GenBank/DDBJ databases">
        <title>Scavenger receptor cd163 is a cell permissive factor for infection with porcine reproductive and respiratory syndrome viruses.</title>
        <authorList>
            <person name="Welch S.-K.W."/>
            <person name="Calvert J.G."/>
            <person name="Slade D.E."/>
            <person name="Shields S.L."/>
        </authorList>
    </citation>
    <scope>NUCLEOTIDE SEQUENCE [MRNA] (ISOFORM 3)</scope>
    <scope>VARIANT VAL-342</scope>
</reference>
<reference key="4">
    <citation type="journal article" date="2006" name="Nature">
        <title>The finished DNA sequence of human chromosome 12.</title>
        <authorList>
            <person name="Scherer S.E."/>
            <person name="Muzny D.M."/>
            <person name="Buhay C.J."/>
            <person name="Chen R."/>
            <person name="Cree A."/>
            <person name="Ding Y."/>
            <person name="Dugan-Rocha S."/>
            <person name="Gill R."/>
            <person name="Gunaratne P."/>
            <person name="Harris R.A."/>
            <person name="Hawes A.C."/>
            <person name="Hernandez J."/>
            <person name="Hodgson A.V."/>
            <person name="Hume J."/>
            <person name="Jackson A."/>
            <person name="Khan Z.M."/>
            <person name="Kovar-Smith C."/>
            <person name="Lewis L.R."/>
            <person name="Lozado R.J."/>
            <person name="Metzker M.L."/>
            <person name="Milosavljevic A."/>
            <person name="Miner G.R."/>
            <person name="Montgomery K.T."/>
            <person name="Morgan M.B."/>
            <person name="Nazareth L.V."/>
            <person name="Scott G."/>
            <person name="Sodergren E."/>
            <person name="Song X.-Z."/>
            <person name="Steffen D."/>
            <person name="Lovering R.C."/>
            <person name="Wheeler D.A."/>
            <person name="Worley K.C."/>
            <person name="Yuan Y."/>
            <person name="Zhang Z."/>
            <person name="Adams C.Q."/>
            <person name="Ansari-Lari M.A."/>
            <person name="Ayele M."/>
            <person name="Brown M.J."/>
            <person name="Chen G."/>
            <person name="Chen Z."/>
            <person name="Clerc-Blankenburg K.P."/>
            <person name="Davis C."/>
            <person name="Delgado O."/>
            <person name="Dinh H.H."/>
            <person name="Draper H."/>
            <person name="Gonzalez-Garay M.L."/>
            <person name="Havlak P."/>
            <person name="Jackson L.R."/>
            <person name="Jacob L.S."/>
            <person name="Kelly S.H."/>
            <person name="Li L."/>
            <person name="Li Z."/>
            <person name="Liu J."/>
            <person name="Liu W."/>
            <person name="Lu J."/>
            <person name="Maheshwari M."/>
            <person name="Nguyen B.-V."/>
            <person name="Okwuonu G.O."/>
            <person name="Pasternak S."/>
            <person name="Perez L.M."/>
            <person name="Plopper F.J.H."/>
            <person name="Santibanez J."/>
            <person name="Shen H."/>
            <person name="Tabor P.E."/>
            <person name="Verduzco D."/>
            <person name="Waldron L."/>
            <person name="Wang Q."/>
            <person name="Williams G.A."/>
            <person name="Zhang J."/>
            <person name="Zhou J."/>
            <person name="Allen C.C."/>
            <person name="Amin A.G."/>
            <person name="Anyalebechi V."/>
            <person name="Bailey M."/>
            <person name="Barbaria J.A."/>
            <person name="Bimage K.E."/>
            <person name="Bryant N.P."/>
            <person name="Burch P.E."/>
            <person name="Burkett C.E."/>
            <person name="Burrell K.L."/>
            <person name="Calderon E."/>
            <person name="Cardenas V."/>
            <person name="Carter K."/>
            <person name="Casias K."/>
            <person name="Cavazos I."/>
            <person name="Cavazos S.R."/>
            <person name="Ceasar H."/>
            <person name="Chacko J."/>
            <person name="Chan S.N."/>
            <person name="Chavez D."/>
            <person name="Christopoulos C."/>
            <person name="Chu J."/>
            <person name="Cockrell R."/>
            <person name="Cox C.D."/>
            <person name="Dang M."/>
            <person name="Dathorne S.R."/>
            <person name="David R."/>
            <person name="Davis C.M."/>
            <person name="Davy-Carroll L."/>
            <person name="Deshazo D.R."/>
            <person name="Donlin J.E."/>
            <person name="D'Souza L."/>
            <person name="Eaves K.A."/>
            <person name="Egan A."/>
            <person name="Emery-Cohen A.J."/>
            <person name="Escotto M."/>
            <person name="Flagg N."/>
            <person name="Forbes L.D."/>
            <person name="Gabisi A.M."/>
            <person name="Garza M."/>
            <person name="Hamilton C."/>
            <person name="Henderson N."/>
            <person name="Hernandez O."/>
            <person name="Hines S."/>
            <person name="Hogues M.E."/>
            <person name="Huang M."/>
            <person name="Idlebird D.G."/>
            <person name="Johnson R."/>
            <person name="Jolivet A."/>
            <person name="Jones S."/>
            <person name="Kagan R."/>
            <person name="King L.M."/>
            <person name="Leal B."/>
            <person name="Lebow H."/>
            <person name="Lee S."/>
            <person name="LeVan J.M."/>
            <person name="Lewis L.C."/>
            <person name="London P."/>
            <person name="Lorensuhewa L.M."/>
            <person name="Loulseged H."/>
            <person name="Lovett D.A."/>
            <person name="Lucier A."/>
            <person name="Lucier R.L."/>
            <person name="Ma J."/>
            <person name="Madu R.C."/>
            <person name="Mapua P."/>
            <person name="Martindale A.D."/>
            <person name="Martinez E."/>
            <person name="Massey E."/>
            <person name="Mawhiney S."/>
            <person name="Meador M.G."/>
            <person name="Mendez S."/>
            <person name="Mercado C."/>
            <person name="Mercado I.C."/>
            <person name="Merritt C.E."/>
            <person name="Miner Z.L."/>
            <person name="Minja E."/>
            <person name="Mitchell T."/>
            <person name="Mohabbat F."/>
            <person name="Mohabbat K."/>
            <person name="Montgomery B."/>
            <person name="Moore N."/>
            <person name="Morris S."/>
            <person name="Munidasa M."/>
            <person name="Ngo R.N."/>
            <person name="Nguyen N.B."/>
            <person name="Nickerson E."/>
            <person name="Nwaokelemeh O.O."/>
            <person name="Nwokenkwo S."/>
            <person name="Obregon M."/>
            <person name="Oguh M."/>
            <person name="Oragunye N."/>
            <person name="Oviedo R.J."/>
            <person name="Parish B.J."/>
            <person name="Parker D.N."/>
            <person name="Parrish J."/>
            <person name="Parks K.L."/>
            <person name="Paul H.A."/>
            <person name="Payton B.A."/>
            <person name="Perez A."/>
            <person name="Perrin W."/>
            <person name="Pickens A."/>
            <person name="Primus E.L."/>
            <person name="Pu L.-L."/>
            <person name="Puazo M."/>
            <person name="Quiles M.M."/>
            <person name="Quiroz J.B."/>
            <person name="Rabata D."/>
            <person name="Reeves K."/>
            <person name="Ruiz S.J."/>
            <person name="Shao H."/>
            <person name="Sisson I."/>
            <person name="Sonaike T."/>
            <person name="Sorelle R.P."/>
            <person name="Sutton A.E."/>
            <person name="Svatek A.F."/>
            <person name="Svetz L.A."/>
            <person name="Tamerisa K.S."/>
            <person name="Taylor T.R."/>
            <person name="Teague B."/>
            <person name="Thomas N."/>
            <person name="Thorn R.D."/>
            <person name="Trejos Z.Y."/>
            <person name="Trevino B.K."/>
            <person name="Ukegbu O.N."/>
            <person name="Urban J.B."/>
            <person name="Vasquez L.I."/>
            <person name="Vera V.A."/>
            <person name="Villasana D.M."/>
            <person name="Wang L."/>
            <person name="Ward-Moore S."/>
            <person name="Warren J.T."/>
            <person name="Wei X."/>
            <person name="White F."/>
            <person name="Williamson A.L."/>
            <person name="Wleczyk R."/>
            <person name="Wooden H.S."/>
            <person name="Wooden S.H."/>
            <person name="Yen J."/>
            <person name="Yoon L."/>
            <person name="Yoon V."/>
            <person name="Zorrilla S.E."/>
            <person name="Nelson D."/>
            <person name="Kucherlapati R."/>
            <person name="Weinstock G."/>
            <person name="Gibbs R.A."/>
        </authorList>
    </citation>
    <scope>NUCLEOTIDE SEQUENCE [LARGE SCALE GENOMIC DNA]</scope>
</reference>
<reference key="5">
    <citation type="journal article" date="2004" name="Genome Res.">
        <title>The status, quality, and expansion of the NIH full-length cDNA project: the Mammalian Gene Collection (MGC).</title>
        <authorList>
            <consortium name="The MGC Project Team"/>
        </authorList>
    </citation>
    <scope>NUCLEOTIDE SEQUENCE [LARGE SCALE MRNA] (ISOFORM 1)</scope>
    <scope>VARIANT VAL-342</scope>
    <source>
        <tissue>Spleen</tissue>
    </source>
</reference>
<reference key="6">
    <citation type="journal article" date="1999" name="Biochem. Biophys. Res. Commun.">
        <title>Shedding of CD163, a novel regulatory mechanism for a member of the scavenger receptor cysteine-rich family.</title>
        <authorList>
            <person name="Droste A."/>
            <person name="Sorg C."/>
            <person name="Hogger P."/>
        </authorList>
    </citation>
    <scope>CLEAVAGE</scope>
</reference>
<reference key="7">
    <citation type="journal article" date="1999" name="J. Leukoc. Biol.">
        <title>Regulation of CD 163 on human macrophages: cross-linking of CD163 induces signaling and activation.</title>
        <authorList>
            <person name="Van den Heuvel M.M."/>
            <person name="Tensen C.P."/>
            <person name="van As J.H."/>
            <person name="Van den Berg T.K."/>
            <person name="Fluitsma D.M."/>
            <person name="Dijkstra C.D."/>
            <person name="Dopp E.A."/>
            <person name="Droste A."/>
            <person name="Van Gaalen F.A."/>
            <person name="Sorg C."/>
            <person name="Hoegger P."/>
            <person name="Beelen R.H.J."/>
        </authorList>
    </citation>
    <scope>FUNCTION</scope>
    <scope>TISSUE SPECIFICITY</scope>
    <scope>INDUCTION</scope>
    <scope>SUBCELLULAR LOCATION</scope>
</reference>
<reference key="8">
    <citation type="journal article" date="2000" name="J. Leukoc. Biol.">
        <title>Regulation of scavenger receptor CD163 expression in human monocytes and macrophages by pro- and antiinflammatory stimuli.</title>
        <authorList>
            <person name="Buechler C."/>
            <person name="Ritter M."/>
            <person name="Orso E."/>
            <person name="Langmann T."/>
            <person name="Klucken J."/>
            <person name="Schmitz G."/>
        </authorList>
    </citation>
    <scope>INDUCTION</scope>
    <scope>SUBCELLULAR LOCATION</scope>
</reference>
<reference key="9">
    <citation type="journal article" date="2001" name="Eur. J. Immunol.">
        <title>Interaction of CD163 with the regulatory subunit of casein kinase II (CKII) and dependence of CD163 signaling on CKII and protein kinase C.</title>
        <authorList>
            <person name="Ritter M."/>
            <person name="Buechler C."/>
            <person name="Kapinsky M."/>
            <person name="Schmitz G."/>
        </authorList>
    </citation>
    <scope>FUNCTION</scope>
    <scope>PHOSPHORYLATION</scope>
    <scope>MUTAGENESIS OF THR-1072 AND SER-1084</scope>
    <scope>INTERACTION WITH CSNK2B</scope>
</reference>
<reference key="10">
    <citation type="journal article" date="2001" name="Nature">
        <title>Identification of the haemoglobin scavenger receptor.</title>
        <authorList>
            <person name="Kristiansen M."/>
            <person name="Graversen J.H."/>
            <person name="Jacobsen C."/>
            <person name="Sonne O."/>
            <person name="Hoffman H.-J."/>
            <person name="Law S.K.A."/>
            <person name="Moestrup S.K."/>
        </authorList>
    </citation>
    <scope>FUNCTION</scope>
    <scope>TISSUE SPECIFICITY</scope>
    <scope>BIOPHYSICOCHEMICAL PROPERTIES</scope>
    <scope>IDENTIFICATION BY MASS SPECTROMETRY</scope>
</reference>
<reference key="11">
    <citation type="journal article" date="2002" name="Clin. Exp. Immunol.">
        <title>Elevated levels of soluble CD163 in sera and fluids from rheumatoid arthritis patients and inhibition of the shedding of CD163 by TIMP-3.</title>
        <authorList>
            <person name="Matsushita N."/>
            <person name="Kashiwagi M."/>
            <person name="Wait R."/>
            <person name="Nagayoshi R."/>
            <person name="Nakamura M."/>
            <person name="Matsuda T."/>
            <person name="Hogger P."/>
            <person name="Guyre P.M."/>
            <person name="Nagase H."/>
            <person name="Matsuyama T."/>
        </authorList>
    </citation>
    <scope>CLEAVAGE</scope>
    <scope>SUBCELLULAR LOCATION</scope>
</reference>
<reference key="12">
    <citation type="journal article" date="2002" name="FEBS Lett.">
        <title>Only the soluble form of the scavenger receptor CD163 acts inhibitory on phorbol ester-activated T-lymphocytes, whereas membrane-bound protein has no effect.</title>
        <authorList>
            <person name="Frings W."/>
            <person name="Dreier J."/>
            <person name="Sorg C."/>
        </authorList>
    </citation>
    <scope>FUNCTION</scope>
</reference>
<reference key="13">
    <citation type="journal article" date="2002" name="J. Leukoc. Biol.">
        <title>Endotoxin induces rapid metalloproteinase-mediated shedding followed by up-regulation of the monocyte hemoglobin scavenger receptor CD163.</title>
        <authorList>
            <person name="Hintz K.A."/>
            <person name="Rassias A.J."/>
            <person name="Wardwell K."/>
            <person name="Moss M.L."/>
            <person name="Morganelli P.M."/>
            <person name="Pioli P.A."/>
            <person name="Givan A.L."/>
            <person name="Wallace P.K."/>
            <person name="Yeager M.P."/>
            <person name="Guyre P.M."/>
        </authorList>
    </citation>
    <scope>MISCELLANEOUS</scope>
</reference>
<reference key="14">
    <citation type="journal article" date="2004" name="Ann. Med.">
        <title>CD163: a regulated hemoglobin scavenger receptor with a role in the anti-inflammatory response.</title>
        <authorList>
            <person name="Moestrup S.K."/>
            <person name="Moller H.J."/>
        </authorList>
    </citation>
    <scope>RELEVANCE AS DISEASE MARKER IN INFLAMMATORY CONDITIONS</scope>
</reference>
<reference key="15">
    <citation type="journal article" date="2004" name="J. Biol. Chem.">
        <title>Molecular characterization of the haptoglobin.hemoglobin receptor CD163. Ligand binding properties of the scavenger receptor cysteine-rich domain region.</title>
        <authorList>
            <person name="Madsen M."/>
            <person name="Moller H.J."/>
            <person name="Nielsen M.J."/>
            <person name="Jacobsen C."/>
            <person name="Graversen J.H."/>
            <person name="van den Berg T."/>
            <person name="Moestrup S.K."/>
        </authorList>
    </citation>
    <scope>DOMAIN</scope>
    <scope>CLEAVAGE SITES</scope>
</reference>
<reference key="16">
    <citation type="journal article" date="2004" name="J. Leukoc. Biol.">
        <title>Cross-linking of FcgammaR triggers shedding of the hemoglobin-haptoglobin scavenger receptor CD163.</title>
        <authorList>
            <person name="Sulahian T.H."/>
            <person name="Pioli P.A."/>
            <person name="Wardwell K."/>
            <person name="Guyre P.M."/>
        </authorList>
    </citation>
    <scope>CLEAVAGE</scope>
</reference>
<reference key="17">
    <citation type="journal article" date="2005" name="J. Proteome Res.">
        <title>Human plasma N-glycoproteome analysis by immunoaffinity subtraction, hydrazide chemistry, and mass spectrometry.</title>
        <authorList>
            <person name="Liu T."/>
            <person name="Qian W.-J."/>
            <person name="Gritsenko M.A."/>
            <person name="Camp D.G. II"/>
            <person name="Monroe M.E."/>
            <person name="Moore R.J."/>
            <person name="Smith R.D."/>
        </authorList>
    </citation>
    <scope>GLYCOSYLATION [LARGE SCALE ANALYSIS] AT ASN-105</scope>
    <source>
        <tissue>Plasma</tissue>
    </source>
</reference>
<reference key="18">
    <citation type="journal article" date="2006" name="J. Leukoc. Biol.">
        <title>The macrophage scavenger receptor CD163: endocytic properties of cytoplasmic tail variants.</title>
        <authorList>
            <person name="Nielsen M.J."/>
            <person name="Madsen M."/>
            <person name="Moller H.J."/>
            <person name="Moestrup S.K."/>
        </authorList>
    </citation>
    <scope>FUNCTION</scope>
    <scope>MUTAGENESIS OF TYR-1096</scope>
    <scope>TISSUE SPECIFICITY</scope>
</reference>
<reference key="19">
    <citation type="journal article" date="2009" name="J. Proteome Res.">
        <title>Glycoproteomics analysis of human liver tissue by combination of multiple enzyme digestion and hydrazide chemistry.</title>
        <authorList>
            <person name="Chen R."/>
            <person name="Jiang X."/>
            <person name="Sun D."/>
            <person name="Han G."/>
            <person name="Wang F."/>
            <person name="Ye M."/>
            <person name="Wang L."/>
            <person name="Zou H."/>
        </authorList>
    </citation>
    <scope>GLYCOSYLATION [LARGE SCALE ANALYSIS] AT ASN-105; ASN-140; ASN-767 AND ASN-1027</scope>
    <source>
        <tissue>Liver</tissue>
    </source>
</reference>
<reference key="20">
    <citation type="journal article" date="2009" name="Mol. Cell. Proteomics">
        <title>A strategy for precise and large scale identification of core fucosylated glycoproteins.</title>
        <authorList>
            <person name="Jia W."/>
            <person name="Lu Z."/>
            <person name="Fu Y."/>
            <person name="Wang H.P."/>
            <person name="Wang L.H."/>
            <person name="Chi H."/>
            <person name="Yuan Z.F."/>
            <person name="Zheng Z.B."/>
            <person name="Song L.N."/>
            <person name="Han H.H."/>
            <person name="Liang Y.M."/>
            <person name="Wang J.L."/>
            <person name="Cai Y."/>
            <person name="Zhang Y.K."/>
            <person name="Deng Y.L."/>
            <person name="Ying W.T."/>
            <person name="He S.M."/>
            <person name="Qian X.H."/>
        </authorList>
    </citation>
    <scope>GLYCOSYLATION AT ASN-105</scope>
</reference>
<reference key="21">
    <citation type="journal article" date="2014" name="J. Proteomics">
        <title>An enzyme assisted RP-RPLC approach for in-depth analysis of human liver phosphoproteome.</title>
        <authorList>
            <person name="Bian Y."/>
            <person name="Song C."/>
            <person name="Cheng K."/>
            <person name="Dong M."/>
            <person name="Wang F."/>
            <person name="Huang J."/>
            <person name="Sun D."/>
            <person name="Wang L."/>
            <person name="Ye M."/>
            <person name="Zou H."/>
        </authorList>
    </citation>
    <scope>IDENTIFICATION BY MASS SPECTROMETRY [LARGE SCALE ANALYSIS]</scope>
    <source>
        <tissue>Liver</tissue>
    </source>
</reference>
<feature type="signal peptide" evidence="1">
    <location>
        <begin position="1"/>
        <end position="41"/>
    </location>
</feature>
<feature type="chain" id="PRO_0000238938" description="Scavenger receptor cysteine-rich type 1 protein M130">
    <location>
        <begin position="42"/>
        <end position="1156"/>
    </location>
</feature>
<feature type="chain" id="PRO_0000238939" description="Soluble CD163">
    <location>
        <begin position="42"/>
        <end status="unknown"/>
    </location>
</feature>
<feature type="topological domain" description="Extracellular" evidence="1">
    <location>
        <begin position="42"/>
        <end position="1050"/>
    </location>
</feature>
<feature type="transmembrane region" description="Helical" evidence="1">
    <location>
        <begin position="1051"/>
        <end position="1071"/>
    </location>
</feature>
<feature type="topological domain" description="Cytoplasmic" evidence="1">
    <location>
        <begin position="1072"/>
        <end position="1156"/>
    </location>
</feature>
<feature type="domain" description="SRCR 1" evidence="2">
    <location>
        <begin position="51"/>
        <end position="152"/>
    </location>
</feature>
<feature type="domain" description="SRCR 2" evidence="2">
    <location>
        <begin position="159"/>
        <end position="259"/>
    </location>
</feature>
<feature type="domain" description="SRCR 3" evidence="2">
    <location>
        <begin position="266"/>
        <end position="366"/>
    </location>
</feature>
<feature type="domain" description="SRCR 4" evidence="2">
    <location>
        <begin position="373"/>
        <end position="473"/>
    </location>
</feature>
<feature type="domain" description="SRCR 5" evidence="2">
    <location>
        <begin position="478"/>
        <end position="578"/>
    </location>
</feature>
<feature type="domain" description="SRCR 6" evidence="2">
    <location>
        <begin position="583"/>
        <end position="683"/>
    </location>
</feature>
<feature type="domain" description="SRCR 7" evidence="2">
    <location>
        <begin position="719"/>
        <end position="819"/>
    </location>
</feature>
<feature type="domain" description="SRCR 8" evidence="2">
    <location>
        <begin position="824"/>
        <end position="926"/>
    </location>
</feature>
<feature type="domain" description="SRCR 9" evidence="2">
    <location>
        <begin position="929"/>
        <end position="1029"/>
    </location>
</feature>
<feature type="short sequence motif" description="Internalization signal">
    <location>
        <begin position="1096"/>
        <end position="1099"/>
    </location>
</feature>
<feature type="site" description="Cleavage; in calcium-free condition">
    <location>
        <begin position="269"/>
        <end position="270"/>
    </location>
</feature>
<feature type="site" description="Cleavage; in calcium-free condition">
    <location>
        <begin position="281"/>
        <end position="282"/>
    </location>
</feature>
<feature type="site" description="Cleavage; in calcium-free condition">
    <location>
        <begin position="333"/>
        <end position="334"/>
    </location>
</feature>
<feature type="site" description="Cleavage; in calcium-free condition">
    <location>
        <begin position="360"/>
        <end position="361"/>
    </location>
</feature>
<feature type="glycosylation site" description="N-linked (GlcNAc...) (complex) asparagine" evidence="13 15 16">
    <location>
        <position position="105"/>
    </location>
</feature>
<feature type="glycosylation site" description="N-linked (GlcNAc...) asparagine" evidence="16">
    <location>
        <position position="140"/>
    </location>
</feature>
<feature type="glycosylation site" description="N-linked (GlcNAc...) asparagine" evidence="16">
    <location>
        <position position="767"/>
    </location>
</feature>
<feature type="glycosylation site" description="N-linked (GlcNAc...) asparagine" evidence="16">
    <location>
        <position position="1027"/>
    </location>
</feature>
<feature type="disulfide bond" evidence="2">
    <location>
        <begin position="76"/>
        <end position="141"/>
    </location>
</feature>
<feature type="disulfide bond" evidence="2">
    <location>
        <begin position="89"/>
        <end position="151"/>
    </location>
</feature>
<feature type="disulfide bond" evidence="2">
    <location>
        <begin position="120"/>
        <end position="130"/>
    </location>
</feature>
<feature type="disulfide bond" evidence="2">
    <location>
        <begin position="184"/>
        <end position="248"/>
    </location>
</feature>
<feature type="disulfide bond" evidence="2">
    <location>
        <begin position="197"/>
        <end position="258"/>
    </location>
</feature>
<feature type="disulfide bond" evidence="2">
    <location>
        <begin position="228"/>
        <end position="238"/>
    </location>
</feature>
<feature type="disulfide bond" evidence="2">
    <location>
        <begin position="291"/>
        <end position="355"/>
    </location>
</feature>
<feature type="disulfide bond" evidence="2">
    <location>
        <begin position="304"/>
        <end position="365"/>
    </location>
</feature>
<feature type="disulfide bond" evidence="2">
    <location>
        <begin position="335"/>
        <end position="345"/>
    </location>
</feature>
<feature type="disulfide bond" evidence="2">
    <location>
        <begin position="398"/>
        <end position="462"/>
    </location>
</feature>
<feature type="disulfide bond" evidence="2">
    <location>
        <begin position="411"/>
        <end position="472"/>
    </location>
</feature>
<feature type="disulfide bond" evidence="2">
    <location>
        <begin position="442"/>
        <end position="452"/>
    </location>
</feature>
<feature type="disulfide bond" evidence="2">
    <location>
        <begin position="503"/>
        <end position="567"/>
    </location>
</feature>
<feature type="disulfide bond" evidence="2">
    <location>
        <begin position="516"/>
        <end position="577"/>
    </location>
</feature>
<feature type="disulfide bond" evidence="2">
    <location>
        <begin position="547"/>
        <end position="557"/>
    </location>
</feature>
<feature type="disulfide bond" evidence="2">
    <location>
        <begin position="608"/>
        <end position="672"/>
    </location>
</feature>
<feature type="disulfide bond" evidence="2">
    <location>
        <begin position="621"/>
        <end position="682"/>
    </location>
</feature>
<feature type="disulfide bond" evidence="2">
    <location>
        <begin position="652"/>
        <end position="662"/>
    </location>
</feature>
<feature type="disulfide bond" evidence="2">
    <location>
        <begin position="744"/>
        <end position="808"/>
    </location>
</feature>
<feature type="disulfide bond" evidence="2">
    <location>
        <begin position="757"/>
        <end position="818"/>
    </location>
</feature>
<feature type="disulfide bond" evidence="2">
    <location>
        <begin position="788"/>
        <end position="798"/>
    </location>
</feature>
<feature type="disulfide bond" evidence="2">
    <location>
        <begin position="864"/>
        <end position="925"/>
    </location>
</feature>
<feature type="disulfide bond" evidence="2">
    <location>
        <begin position="895"/>
        <end position="905"/>
    </location>
</feature>
<feature type="disulfide bond" evidence="2">
    <location>
        <begin position="954"/>
        <end position="1018"/>
    </location>
</feature>
<feature type="disulfide bond" evidence="2">
    <location>
        <begin position="967"/>
        <end position="1028"/>
    </location>
</feature>
<feature type="disulfide bond" evidence="2">
    <location>
        <begin position="998"/>
        <end position="1008"/>
    </location>
</feature>
<feature type="splice variant" id="VSP_019013" description="In isoform 4." evidence="19">
    <original>R</original>
    <variation>SKTQKTSLIGSYTVKGTGLGSHSCLFLKPCLLPG</variation>
    <location>
        <position position="579"/>
    </location>
</feature>
<feature type="splice variant" id="VSP_019014" description="In isoform 2." evidence="19">
    <original>ENSHESADFSAAELISVSKFLPISGMEKEAILSHTEKENGNL</original>
    <variation>GLWVLGGSIAQGFRSVAAVEAQTFYFDKQLKKSKNVIGSLDAYNGQE</variation>
    <location>
        <begin position="1115"/>
        <end position="1156"/>
    </location>
</feature>
<feature type="splice variant" id="VSP_019015" description="In isoform 3 and isoform 4." evidence="19 20">
    <original>ENSHESADFSAAELISVSKFLPISGMEKEAILSHTEKENGNL</original>
    <variation>GGHSEPH</variation>
    <location>
        <begin position="1115"/>
        <end position="1156"/>
    </location>
</feature>
<feature type="sequence variant" id="VAR_026574" description="In dbSNP:rs4883263." evidence="4 12 17 18">
    <original>I</original>
    <variation>V</variation>
    <location>
        <position position="342"/>
    </location>
</feature>
<feature type="mutagenesis site" description="Impaired phosphorylation by PRKCA." evidence="8">
    <original>T</original>
    <variation>A</variation>
    <location>
        <position position="1072"/>
    </location>
</feature>
<feature type="mutagenesis site" description="Impaired phosphorylation by PRKCA." evidence="8">
    <original>S</original>
    <variation>A</variation>
    <location>
        <position position="1084"/>
    </location>
</feature>
<feature type="mutagenesis site" description="Massive decrease of endocytotic activity." evidence="14">
    <original>Y</original>
    <variation>A</variation>
    <location>
        <position position="1096"/>
    </location>
</feature>
<name>C163A_HUMAN</name>